<keyword id="KW-0085">Behavior</keyword>
<keyword id="KW-1015">Disulfide bond</keyword>
<keyword id="KW-0379">Hydroxylation</keyword>
<keyword id="KW-0964">Secreted</keyword>
<keyword id="KW-0732">Signal</keyword>
<name>A70A_DROMA</name>
<comment type="function">
    <text>Represses female sexual receptivity and stimulates oviposition.</text>
</comment>
<comment type="subcellular location">
    <subcellularLocation>
        <location>Secreted</location>
    </subcellularLocation>
</comment>
<comment type="tissue specificity">
    <text>Main cells of the accessory glands of males (paragonial gland).</text>
</comment>
<dbReference type="EMBL" id="X99412">
    <property type="protein sequence ID" value="CAA67789.1"/>
    <property type="molecule type" value="Genomic_DNA"/>
</dbReference>
<dbReference type="SMR" id="P67806"/>
<dbReference type="EnsemblMetazoa" id="XM_033303866.1">
    <property type="protein sequence ID" value="XP_033159757.1"/>
    <property type="gene ID" value="LOC117140780"/>
</dbReference>
<dbReference type="Proteomes" id="UP000515162">
    <property type="component" value="Unplaced"/>
</dbReference>
<dbReference type="GO" id="GO:0005576">
    <property type="term" value="C:extracellular region"/>
    <property type="evidence" value="ECO:0007669"/>
    <property type="project" value="UniProtKB-SubCell"/>
</dbReference>
<dbReference type="GO" id="GO:0005179">
    <property type="term" value="F:hormone activity"/>
    <property type="evidence" value="ECO:0007669"/>
    <property type="project" value="InterPro"/>
</dbReference>
<dbReference type="GO" id="GO:0046008">
    <property type="term" value="P:regulation of female receptivity, post-mating"/>
    <property type="evidence" value="ECO:0007669"/>
    <property type="project" value="InterPro"/>
</dbReference>
<dbReference type="InterPro" id="IPR012608">
    <property type="entry name" value="Sex_peptide"/>
</dbReference>
<dbReference type="Pfam" id="PF08138">
    <property type="entry name" value="Sex_peptide"/>
    <property type="match status" value="1"/>
</dbReference>
<evidence type="ECO:0000250" key="1"/>
<reference key="1">
    <citation type="journal article" date="1997" name="Genetics">
        <title>Evolutionary history of the sex-peptide (Acp70A) gene region in Drosophila melanogaster.</title>
        <authorList>
            <person name="Cirera S."/>
            <person name="Aguade M.N."/>
        </authorList>
    </citation>
    <scope>NUCLEOTIDE SEQUENCE [GENOMIC DNA]</scope>
</reference>
<accession>P67806</accession>
<accession>O18666</accession>
<protein>
    <recommendedName>
        <fullName>Accessory gland-specific peptide 70A</fullName>
    </recommendedName>
    <alternativeName>
        <fullName>Paragonial peptide B</fullName>
    </alternativeName>
    <alternativeName>
        <fullName>Sex peptide</fullName>
        <shortName>SP</shortName>
    </alternativeName>
</protein>
<organism>
    <name type="scientific">Drosophila mauritiana</name>
    <name type="common">Fruit fly</name>
    <dbReference type="NCBI Taxonomy" id="7226"/>
    <lineage>
        <taxon>Eukaryota</taxon>
        <taxon>Metazoa</taxon>
        <taxon>Ecdysozoa</taxon>
        <taxon>Arthropoda</taxon>
        <taxon>Hexapoda</taxon>
        <taxon>Insecta</taxon>
        <taxon>Pterygota</taxon>
        <taxon>Neoptera</taxon>
        <taxon>Endopterygota</taxon>
        <taxon>Diptera</taxon>
        <taxon>Brachycera</taxon>
        <taxon>Muscomorpha</taxon>
        <taxon>Ephydroidea</taxon>
        <taxon>Drosophilidae</taxon>
        <taxon>Drosophila</taxon>
        <taxon>Sophophora</taxon>
    </lineage>
</organism>
<feature type="signal peptide" evidence="1">
    <location>
        <begin position="1"/>
        <end position="19"/>
    </location>
</feature>
<feature type="chain" id="PRO_0000020586" description="Accessory gland-specific peptide 70A">
    <location>
        <begin position="20"/>
        <end position="55"/>
    </location>
</feature>
<feature type="modified residue" description="Hydroxyproline" evidence="1">
    <location>
        <position position="28"/>
    </location>
</feature>
<feature type="modified residue" description="Hydroxyproline" evidence="1">
    <location>
        <position position="32"/>
    </location>
</feature>
<feature type="modified residue" description="Hydroxyproline" evidence="1">
    <location>
        <position position="34"/>
    </location>
</feature>
<feature type="modified residue" description="Hydroxyproline" evidence="1">
    <location>
        <position position="38"/>
    </location>
</feature>
<feature type="disulfide bond" evidence="1">
    <location>
        <begin position="43"/>
        <end position="55"/>
    </location>
</feature>
<gene>
    <name type="primary">Acp70A</name>
    <name type="synonym">PAPB</name>
</gene>
<proteinExistence type="evidence at transcript level"/>
<sequence>MKTLSLFLVLVCLLGLVQSWEWPWNRKPTKYPIPSPNPRDKWCRLNLGPAWGGRC</sequence>